<evidence type="ECO:0000256" key="1">
    <source>
        <dbReference type="SAM" id="MobiDB-lite"/>
    </source>
</evidence>
<evidence type="ECO:0000269" key="2">
    <source>
    </source>
</evidence>
<evidence type="ECO:0000269" key="3">
    <source>
    </source>
</evidence>
<evidence type="ECO:0000269" key="4">
    <source>
    </source>
</evidence>
<evidence type="ECO:0000269" key="5">
    <source>
    </source>
</evidence>
<evidence type="ECO:0000269" key="6">
    <source>
    </source>
</evidence>
<evidence type="ECO:0000269" key="7">
    <source>
    </source>
</evidence>
<evidence type="ECO:0000269" key="8">
    <source>
    </source>
</evidence>
<evidence type="ECO:0000269" key="9">
    <source>
    </source>
</evidence>
<evidence type="ECO:0000269" key="10">
    <source>
    </source>
</evidence>
<evidence type="ECO:0000303" key="11">
    <source>
    </source>
</evidence>
<evidence type="ECO:0000305" key="12"/>
<evidence type="ECO:0000305" key="13">
    <source>
    </source>
</evidence>
<evidence type="ECO:0007744" key="14">
    <source>
    </source>
</evidence>
<evidence type="ECO:0007829" key="15">
    <source>
        <dbReference type="PDB" id="3U28"/>
    </source>
</evidence>
<organism>
    <name type="scientific">Saccharomyces cerevisiae (strain ATCC 204508 / S288c)</name>
    <name type="common">Baker's yeast</name>
    <dbReference type="NCBI Taxonomy" id="559292"/>
    <lineage>
        <taxon>Eukaryota</taxon>
        <taxon>Fungi</taxon>
        <taxon>Dikarya</taxon>
        <taxon>Ascomycota</taxon>
        <taxon>Saccharomycotina</taxon>
        <taxon>Saccharomycetes</taxon>
        <taxon>Saccharomycetales</taxon>
        <taxon>Saccharomycetaceae</taxon>
        <taxon>Saccharomyces</taxon>
    </lineage>
</organism>
<sequence length="205" mass="21480">MSFRGGNRGGRGGFRGGFRGGRTGSARSFQQGPPDTVLEMGAFLHPCEGDIVCRSINTKIPYFNAPIYLENKTQVGKVDEILGPLNEVFFTIKCGDGVQATSFKEGDKFYIAADKLLPIERFLPKPKVVGPPKPKNKKKRSGAPGGRGGASMGRGGSRGGFRGGRGGSSFRGGRGGSSFRGGSRGGSFRGGSRGGSRGGFRGGRR</sequence>
<keyword id="KW-0002">3D-structure</keyword>
<keyword id="KW-1017">Isopeptide bond</keyword>
<keyword id="KW-0488">Methylation</keyword>
<keyword id="KW-0539">Nucleus</keyword>
<keyword id="KW-1185">Reference proteome</keyword>
<keyword id="KW-0677">Repeat</keyword>
<keyword id="KW-0687">Ribonucleoprotein</keyword>
<keyword id="KW-0690">Ribosome biogenesis</keyword>
<keyword id="KW-0694">RNA-binding</keyword>
<keyword id="KW-0698">rRNA processing</keyword>
<keyword id="KW-0832">Ubl conjugation</keyword>
<feature type="chain" id="PRO_0000208566" description="H/ACA ribonucleoprotein complex subunit GAR1">
    <location>
        <begin position="1"/>
        <end position="205"/>
    </location>
</feature>
<feature type="region of interest" description="Disordered" evidence="1">
    <location>
        <begin position="1"/>
        <end position="31"/>
    </location>
</feature>
<feature type="region of interest" description="RGG-box 1">
    <location>
        <begin position="4"/>
        <end position="21"/>
    </location>
</feature>
<feature type="region of interest" description="Disordered" evidence="1">
    <location>
        <begin position="124"/>
        <end position="205"/>
    </location>
</feature>
<feature type="region of interest" description="RGG-box 2">
    <location>
        <begin position="147"/>
        <end position="205"/>
    </location>
</feature>
<feature type="compositionally biased region" description="Gly residues" evidence="1">
    <location>
        <begin position="1"/>
        <end position="23"/>
    </location>
</feature>
<feature type="compositionally biased region" description="Gly residues" evidence="1">
    <location>
        <begin position="143"/>
        <end position="205"/>
    </location>
</feature>
<feature type="modified residue" description="Asymmetric dimethylarginine; by HMT1" evidence="8 13">
    <location>
        <position position="4"/>
    </location>
</feature>
<feature type="modified residue" description="Asymmetric dimethylarginine; by HMT1; alternate" evidence="8 13">
    <location>
        <position position="8"/>
    </location>
</feature>
<feature type="modified residue" description="Omega-N-methylarginine; by HMT1; alternate" evidence="8 13">
    <location>
        <position position="8"/>
    </location>
</feature>
<feature type="modified residue" description="Asymmetric dimethylarginine; by HMT1" evidence="8 13">
    <location>
        <position position="11"/>
    </location>
</feature>
<feature type="modified residue" description="Asymmetric dimethylarginine; by HMT1; alternate" evidence="7 8 13">
    <location>
        <position position="15"/>
    </location>
</feature>
<feature type="modified residue" description="Omega-N-methylarginine; by HMT1; alternate" evidence="7">
    <location>
        <position position="15"/>
    </location>
</feature>
<feature type="modified residue" description="Asymmetric dimethylarginine; by HMT1" evidence="7 8 13">
    <location>
        <position position="19"/>
    </location>
</feature>
<feature type="modified residue" description="Asymmetric dimethylarginine; by HMT1; alternate" evidence="7">
    <location>
        <position position="147"/>
    </location>
</feature>
<feature type="modified residue" description="Omega-N-methylarginine; by HMT1; alternate" evidence="6 8 13">
    <location>
        <position position="147"/>
    </location>
</feature>
<feature type="modified residue" description="Asymmetric dimethylarginine; by HMT1; alternate" evidence="7 8 13">
    <location>
        <position position="154"/>
    </location>
</feature>
<feature type="modified residue" description="Omega-N-methylarginine; by HMT1; alternate" evidence="8 13">
    <location>
        <position position="154"/>
    </location>
</feature>
<feature type="modified residue" description="Asymmetric dimethylarginine; by HMT1; alternate" evidence="8 13">
    <location>
        <position position="158"/>
    </location>
</feature>
<feature type="modified residue" description="Omega-N-methylarginine; by HMT1; alternate" evidence="7 8 13">
    <location>
        <position position="158"/>
    </location>
</feature>
<feature type="modified residue" description="Asymmetric dimethylarginine; by HMT1" evidence="8 13">
    <location>
        <position position="162"/>
    </location>
</feature>
<feature type="modified residue" description="Asymmetric dimethylarginine; by HMT1; alternate" evidence="8 13">
    <location>
        <position position="165"/>
    </location>
</feature>
<feature type="modified residue" description="Omega-N-methylarginine; by HMT1; alternate" evidence="8 13">
    <location>
        <position position="165"/>
    </location>
</feature>
<feature type="modified residue" description="Asymmetric dimethylarginine; by HMT1" evidence="8 13">
    <location>
        <position position="171"/>
    </location>
</feature>
<feature type="modified residue" description="Asymmetric dimethylarginine; by HMT1" evidence="8 13">
    <location>
        <position position="174"/>
    </location>
</feature>
<feature type="modified residue" description="Omega-N-methylarginine; by HMT1" evidence="8 13">
    <location>
        <position position="180"/>
    </location>
</feature>
<feature type="modified residue" description="Omega-N-methylarginine; by HMT1" evidence="8 13">
    <location>
        <position position="184"/>
    </location>
</feature>
<feature type="modified residue" description="Asymmetric dimethylarginine; by HMT1; alternate" evidence="8 13">
    <location>
        <position position="189"/>
    </location>
</feature>
<feature type="modified residue" description="Omega-N-methylarginine; by HMT1; alternate" evidence="8 13">
    <location>
        <position position="189"/>
    </location>
</feature>
<feature type="modified residue" description="Asymmetric dimethylarginine; by HMT1" evidence="8 13">
    <location>
        <position position="193"/>
    </location>
</feature>
<feature type="modified residue" description="Asymmetric dimethylarginine; by HMT1" evidence="8 13">
    <location>
        <position position="197"/>
    </location>
</feature>
<feature type="modified residue" description="Asymmetric dimethylarginine; by HMT1" evidence="8 13">
    <location>
        <position position="201"/>
    </location>
</feature>
<feature type="cross-link" description="Glycyl lysine isopeptide (Lys-Gly) (interchain with G-Cter in ubiquitin)" evidence="14">
    <location>
        <position position="77"/>
    </location>
</feature>
<feature type="strand" evidence="15">
    <location>
        <begin position="37"/>
        <end position="47"/>
    </location>
</feature>
<feature type="strand" evidence="15">
    <location>
        <begin position="50"/>
        <end position="55"/>
    </location>
</feature>
<feature type="strand" evidence="15">
    <location>
        <begin position="57"/>
        <end position="61"/>
    </location>
</feature>
<feature type="strand" evidence="15">
    <location>
        <begin position="66"/>
        <end position="68"/>
    </location>
</feature>
<feature type="strand" evidence="15">
    <location>
        <begin position="74"/>
        <end position="84"/>
    </location>
</feature>
<feature type="strand" evidence="15">
    <location>
        <begin position="89"/>
        <end position="94"/>
    </location>
</feature>
<feature type="helix" evidence="15">
    <location>
        <begin position="100"/>
        <end position="102"/>
    </location>
</feature>
<feature type="strand" evidence="15">
    <location>
        <begin position="108"/>
        <end position="112"/>
    </location>
</feature>
<feature type="helix" evidence="15">
    <location>
        <begin position="113"/>
        <end position="115"/>
    </location>
</feature>
<feature type="helix" evidence="15">
    <location>
        <begin position="119"/>
        <end position="122"/>
    </location>
</feature>
<reference key="1">
    <citation type="journal article" date="1992" name="EMBO J.">
        <title>GAR1 is an essential small nucleolar RNP protein required for pre-rRNA processing in yeast.</title>
        <authorList>
            <person name="Girard J.-P."/>
            <person name="Lehtonen H."/>
            <person name="Caizergues-Ferrer M."/>
            <person name="Amalric F."/>
            <person name="Tollervey D."/>
            <person name="Lapeyre B."/>
        </authorList>
    </citation>
    <scope>NUCLEOTIDE SEQUENCE [GENOMIC DNA]</scope>
    <source>
        <strain>YNN 281</strain>
    </source>
</reference>
<reference key="2">
    <citation type="journal article" date="1994" name="Science">
        <title>Complete nucleotide sequence of Saccharomyces cerevisiae chromosome VIII.</title>
        <authorList>
            <person name="Johnston M."/>
            <person name="Andrews S."/>
            <person name="Brinkman R."/>
            <person name="Cooper J."/>
            <person name="Ding H."/>
            <person name="Dover J."/>
            <person name="Du Z."/>
            <person name="Favello A."/>
            <person name="Fulton L."/>
            <person name="Gattung S."/>
            <person name="Geisel C."/>
            <person name="Kirsten J."/>
            <person name="Kucaba T."/>
            <person name="Hillier L.W."/>
            <person name="Jier M."/>
            <person name="Johnston L."/>
            <person name="Langston Y."/>
            <person name="Latreille P."/>
            <person name="Louis E.J."/>
            <person name="Macri C."/>
            <person name="Mardis E."/>
            <person name="Menezes S."/>
            <person name="Mouser L."/>
            <person name="Nhan M."/>
            <person name="Rifkin L."/>
            <person name="Riles L."/>
            <person name="St Peter H."/>
            <person name="Trevaskis E."/>
            <person name="Vaughan K."/>
            <person name="Vignati D."/>
            <person name="Wilcox L."/>
            <person name="Wohldman P."/>
            <person name="Waterston R."/>
            <person name="Wilson R."/>
            <person name="Vaudin M."/>
        </authorList>
    </citation>
    <scope>NUCLEOTIDE SEQUENCE [LARGE SCALE GENOMIC DNA]</scope>
    <source>
        <strain>ATCC 204508 / S288c</strain>
    </source>
</reference>
<reference key="3">
    <citation type="journal article" date="2014" name="G3 (Bethesda)">
        <title>The reference genome sequence of Saccharomyces cerevisiae: Then and now.</title>
        <authorList>
            <person name="Engel S.R."/>
            <person name="Dietrich F.S."/>
            <person name="Fisk D.G."/>
            <person name="Binkley G."/>
            <person name="Balakrishnan R."/>
            <person name="Costanzo M.C."/>
            <person name="Dwight S.S."/>
            <person name="Hitz B.C."/>
            <person name="Karra K."/>
            <person name="Nash R.S."/>
            <person name="Weng S."/>
            <person name="Wong E.D."/>
            <person name="Lloyd P."/>
            <person name="Skrzypek M.S."/>
            <person name="Miyasato S.R."/>
            <person name="Simison M."/>
            <person name="Cherry J.M."/>
        </authorList>
    </citation>
    <scope>GENOME REANNOTATION</scope>
    <source>
        <strain>ATCC 204508 / S288c</strain>
    </source>
</reference>
<reference key="4">
    <citation type="journal article" date="2007" name="Genome Res.">
        <title>Approaching a complete repository of sequence-verified protein-encoding clones for Saccharomyces cerevisiae.</title>
        <authorList>
            <person name="Hu Y."/>
            <person name="Rolfs A."/>
            <person name="Bhullar B."/>
            <person name="Murthy T.V.S."/>
            <person name="Zhu C."/>
            <person name="Berger M.F."/>
            <person name="Camargo A.A."/>
            <person name="Kelley F."/>
            <person name="McCarron S."/>
            <person name="Jepson D."/>
            <person name="Richardson A."/>
            <person name="Raphael J."/>
            <person name="Moreira D."/>
            <person name="Taycher E."/>
            <person name="Zuo D."/>
            <person name="Mohr S."/>
            <person name="Kane M.F."/>
            <person name="Williamson J."/>
            <person name="Simpson A.J.G."/>
            <person name="Bulyk M.L."/>
            <person name="Harlow E."/>
            <person name="Marsischky G."/>
            <person name="Kolodner R.D."/>
            <person name="LaBaer J."/>
        </authorList>
    </citation>
    <scope>NUCLEOTIDE SEQUENCE [GENOMIC DNA]</scope>
    <source>
        <strain>ATCC 204508 / S288c</strain>
    </source>
</reference>
<reference key="5">
    <citation type="journal article" date="1997" name="EMBO J.">
        <title>A small nucleolar RNP protein is required for pseudouridylation of eukaryotic ribosomal RNAs.</title>
        <authorList>
            <person name="Bousquet-Antonelli C."/>
            <person name="Henry Y."/>
            <person name="Gelugne J.-P."/>
            <person name="Caizergues-Ferrer M."/>
            <person name="Kiss T."/>
        </authorList>
    </citation>
    <scope>FUNCTION</scope>
</reference>
<reference key="6">
    <citation type="journal article" date="1998" name="EMBO J.">
        <title>Nhp2p and Nop10p are essential for the function of H/ACA snoRNPs.</title>
        <authorList>
            <person name="Henras A."/>
            <person name="Henry Y."/>
            <person name="Bousquet-Antonelli C."/>
            <person name="Noaillac-Depeyre J."/>
            <person name="Gelugne J.-P."/>
            <person name="Caizergues-Ferrer M."/>
        </authorList>
    </citation>
    <scope>FUNCTION</scope>
    <scope>SUBCELLULAR LOCATION</scope>
    <scope>IDENTIFICATION IN H/ACA SNORNP COMPLEXES</scope>
</reference>
<reference key="7">
    <citation type="journal article" date="1998" name="J. Biol. Chem.">
        <title>Gar1p binds to the small nucleolar RNAs snR10 and snR30 in vitro through a nontypical RNA binding element.</title>
        <authorList>
            <person name="Bagni C."/>
            <person name="Lapeyre B."/>
        </authorList>
    </citation>
    <scope>INTERACTION WITH H/ACA SNORNAS</scope>
</reference>
<reference key="8">
    <citation type="journal article" date="2003" name="Nature">
        <title>Global analysis of protein localization in budding yeast.</title>
        <authorList>
            <person name="Huh W.-K."/>
            <person name="Falvo J.V."/>
            <person name="Gerke L.C."/>
            <person name="Carroll A.S."/>
            <person name="Howson R.W."/>
            <person name="Weissman J.S."/>
            <person name="O'Shea E.K."/>
        </authorList>
    </citation>
    <scope>SUBCELLULAR LOCATION [LARGE SCALE ANALYSIS]</scope>
</reference>
<reference key="9">
    <citation type="journal article" date="2003" name="Nature">
        <title>Global analysis of protein expression in yeast.</title>
        <authorList>
            <person name="Ghaemmaghami S."/>
            <person name="Huh W.-K."/>
            <person name="Bower K."/>
            <person name="Howson R.W."/>
            <person name="Belle A."/>
            <person name="Dephoure N."/>
            <person name="O'Shea E.K."/>
            <person name="Weissman J.S."/>
        </authorList>
    </citation>
    <scope>LEVEL OF PROTEIN EXPRESSION [LARGE SCALE ANALYSIS]</scope>
</reference>
<reference key="10">
    <citation type="journal article" date="2003" name="RNA">
        <title>In vivo analysis of nucleolar proteins modified by the yeast arginine methyltransferase Hmt1/Rmt1p.</title>
        <authorList>
            <person name="Xu C."/>
            <person name="Henry P.A."/>
            <person name="Setya A."/>
            <person name="Henry M.F."/>
        </authorList>
    </citation>
    <scope>SUBCELLULAR LOCATION</scope>
    <scope>METHYLATION BY HMT1</scope>
</reference>
<reference key="11">
    <citation type="journal article" date="2004" name="RNA">
        <title>Cbf5p, the putative pseudouridine synthase of H/ACA-type snoRNPs, can form a complex with Gar1p and Nop10p in absence of Nhp2p and box H/ACA snoRNAs.</title>
        <authorList>
            <person name="Henras A.K."/>
            <person name="Capeyrou R."/>
            <person name="Henry Y."/>
            <person name="Caizergues-Ferrer M."/>
        </authorList>
    </citation>
    <scope>CHARACTERIZATION OF THE H/ACA SNORNP COMPLEX</scope>
</reference>
<reference key="12">
    <citation type="journal article" date="2011" name="EMBO J.">
        <title>U2 snRNA is inducibly pseudouridylated at novel sites by Pus7p and snR81 RNP.</title>
        <authorList>
            <person name="Wu G."/>
            <person name="Xiao M."/>
            <person name="Yang C."/>
            <person name="Yu Y.T."/>
        </authorList>
    </citation>
    <scope>FUNCTION</scope>
    <scope>IDENTIFICATION IN THE H/ACA SNORNP COMPLEX</scope>
</reference>
<reference key="13">
    <citation type="journal article" date="2012" name="Proteomics">
        <title>Sites of ubiquitin attachment in Saccharomyces cerevisiae.</title>
        <authorList>
            <person name="Starita L.M."/>
            <person name="Lo R.S."/>
            <person name="Eng J.K."/>
            <person name="von Haller P.D."/>
            <person name="Fields S."/>
        </authorList>
    </citation>
    <scope>UBIQUITINATION [LARGE SCALE ANALYSIS] AT LYS-77</scope>
    <scope>IDENTIFICATION BY MASS SPECTROMETRY [LARGE SCALE ANALYSIS]</scope>
</reference>
<reference key="14">
    <citation type="journal article" date="2015" name="Proteomics">
        <title>Yeast proteins Gar1p, Nop1p, Npl3p, Nsr1p, and Rps2p are natively methylated and are substrates of the arginine methyltransferase Hmt1p.</title>
        <authorList>
            <person name="Yagoub D."/>
            <person name="Hart-Smith G."/>
            <person name="Moecking J."/>
            <person name="Erce M.A."/>
            <person name="Wilkins M.R."/>
        </authorList>
    </citation>
    <scope>METHYLATION AT ARG-15; ARG-19; ARG-147; ARG-154 AND ARG-158</scope>
</reference>
<reference key="15">
    <citation type="journal article" date="2015" name="Proteomics">
        <title>Expanding the yeast protein arginine methylome.</title>
        <authorList>
            <person name="Plank M."/>
            <person name="Fischer R."/>
            <person name="Geoghegan V."/>
            <person name="Charles P.D."/>
            <person name="Konietzny R."/>
            <person name="Acuto O."/>
            <person name="Pears C."/>
            <person name="Schofield C.J."/>
            <person name="Kessler B.M."/>
        </authorList>
    </citation>
    <scope>METHYLATION AT ARG-147</scope>
</reference>
<reference key="16">
    <citation type="journal article" date="2021" name="J. Proteome Res.">
        <title>Discovery of arginine methylation, phosphorylation, and their co-occurrence in condensate-associated proteins in Saccharomyces cerevisiae.</title>
        <authorList>
            <person name="Hamey J.J."/>
            <person name="Nguyen A."/>
            <person name="Wilkins M.R."/>
        </authorList>
    </citation>
    <scope>METHYLATION AT ARG-4; ARG-8; ARG-11; ARG-15; ARG-19; ARG-147; ARG-154; ARG-158; ARG-162; ARG-165; ARG-171; ARG-174; ARG-180; ARG-184; ARG-189; ARG-193; ARG-197 AND ARG-201</scope>
</reference>
<reference key="17">
    <citation type="journal article" date="2011" name="EMBO J.">
        <title>Structure of the Shq1-Cbf5-Nop10-Gar1 complex and implications for H/ACA RNP biogenesis and dyskeratosis congenita.</title>
        <authorList>
            <person name="Li S."/>
            <person name="Duan J."/>
            <person name="Li D."/>
            <person name="Ma S."/>
            <person name="Ye K."/>
        </authorList>
    </citation>
    <scope>X-RAY CRYSTALLOGRAPHY (3.06 ANGSTROMS) OF 32-124 IN A COMPLEX WITH CBF5; NOP10 AND SHQ1</scope>
</reference>
<reference key="18">
    <citation type="journal article" date="2011" name="Genes Dev.">
        <title>Reconstitution and structural analysis of the yeast box H/ACA RNA-guided pseudouridine synthase.</title>
        <authorList>
            <person name="Li S."/>
            <person name="Duan J."/>
            <person name="Li D."/>
            <person name="Yang B."/>
            <person name="Dong M."/>
            <person name="Ye K."/>
        </authorList>
    </citation>
    <scope>X-RAY CRYSTALLOGRAPHY (1.90 ANGSTROMS) OF 32-124 IN A COMPLEX WITH CBF5 AND NOP10</scope>
</reference>
<protein>
    <recommendedName>
        <fullName evidence="12">H/ACA ribonucleoprotein complex subunit GAR1</fullName>
    </recommendedName>
    <alternativeName>
        <fullName evidence="11">Glycine/arginine-rich protein 1</fullName>
    </alternativeName>
    <alternativeName>
        <fullName>snoRNP protein GAR1</fullName>
    </alternativeName>
</protein>
<comment type="function">
    <text evidence="5 10">Non-catalytic component of the H/ACA small nucleolar ribonucleoprotein (H/ACA snoRNP), which catalyzes pseudouridylation of rRNA and is required for ribosome biogenesis (PubMed:9303321, PubMed:9843512). This involves the isomerization of uridine such that the ribose is subsequently attached to C5, instead of the normal N1 (PubMed:9303321, PubMed:9843512). Pseudouridine ('psi') residues may serve to stabilize the conformation of rRNAs (PubMed:9843512). The H/ACA snoRNP complex also mediates pseudouridylation of other types of RNAs (PubMed:21131909). The H/ACA snoRNP complex mediates pseudouridylation at position 93 in U2 snRNA (PubMed:21131909). Essential for growth (PubMed:9303321).</text>
</comment>
<comment type="subunit">
    <text evidence="5 9 10">Component of the small nucleolar ribonucleoprotein particles containing H/ACA-type snoRNAs (H/ACA snoRNPs) (PubMed:21131909, PubMed:9556561, PubMed:9843512). The protein component of the H/ACA snoRNP contains CBF5, GAR1, NHP2 and NOP10 (PubMed:21131909, PubMed:9556561, PubMed:9843512). The complex contains a stable core composed of CBF5 and NOP10, to which GAR1 and NHP2 subsequently bind. Interacts with snoRNAs (PubMed:9556561, PubMed:9843512).</text>
</comment>
<comment type="interaction">
    <interactant intactId="EBI-7321">
        <id>P28007</id>
    </interactant>
    <interactant intactId="EBI-12014">
        <id>P32495</id>
        <label>NHP2</label>
    </interactant>
    <organismsDiffer>false</organismsDiffer>
    <experiments>4</experiments>
</comment>
<comment type="interaction">
    <interactant intactId="EBI-7321">
        <id>P28007</id>
    </interactant>
    <interactant intactId="EBI-2052475">
        <id>Q6Q547</id>
        <label>NOP10</label>
    </interactant>
    <organismsDiffer>false</organismsDiffer>
    <experiments>3</experiments>
</comment>
<comment type="interaction">
    <interactant intactId="EBI-7321">
        <id>P28007</id>
    </interactant>
    <interactant intactId="EBI-505">
        <id>P53131</id>
        <label>PRP43</label>
    </interactant>
    <organismsDiffer>false</organismsDiffer>
    <experiments>3</experiments>
</comment>
<comment type="subcellular location">
    <subcellularLocation>
        <location evidence="2 3 10">Nucleus</location>
        <location evidence="2 3 10">Nucleolus</location>
    </subcellularLocation>
</comment>
<comment type="PTM">
    <text evidence="2">Methylated by HMT1, forming asymmetric dimethylarginines (DMA) within a domain referred to as an RGG box, made up of repeated Gly-Gly dipeptides interspersed with Arg and aromatic residues.</text>
</comment>
<comment type="miscellaneous">
    <text evidence="4">Present with 5730 molecules/cell in log phase SD medium.</text>
</comment>
<comment type="similarity">
    <text evidence="12">Belongs to the GAR1 family.</text>
</comment>
<dbReference type="EMBL" id="X63617">
    <property type="protein sequence ID" value="CAA45162.1"/>
    <property type="molecule type" value="Genomic_DNA"/>
</dbReference>
<dbReference type="EMBL" id="U00060">
    <property type="protein sequence ID" value="AAB68929.1"/>
    <property type="molecule type" value="Genomic_DNA"/>
</dbReference>
<dbReference type="EMBL" id="AY558284">
    <property type="protein sequence ID" value="AAS56610.1"/>
    <property type="molecule type" value="Genomic_DNA"/>
</dbReference>
<dbReference type="EMBL" id="BK006934">
    <property type="protein sequence ID" value="DAA06785.1"/>
    <property type="molecule type" value="Genomic_DNA"/>
</dbReference>
<dbReference type="PIR" id="S19634">
    <property type="entry name" value="S19634"/>
</dbReference>
<dbReference type="RefSeq" id="NP_011957.1">
    <property type="nucleotide sequence ID" value="NM_001179219.1"/>
</dbReference>
<dbReference type="PDB" id="3U28">
    <property type="method" value="X-ray"/>
    <property type="resolution" value="1.90 A"/>
    <property type="chains" value="C=32-124"/>
</dbReference>
<dbReference type="PDB" id="3UAI">
    <property type="method" value="X-ray"/>
    <property type="resolution" value="3.06 A"/>
    <property type="chains" value="C=32-124"/>
</dbReference>
<dbReference type="PDBsum" id="3U28"/>
<dbReference type="PDBsum" id="3UAI"/>
<dbReference type="SMR" id="P28007"/>
<dbReference type="BioGRID" id="36524">
    <property type="interactions" value="246"/>
</dbReference>
<dbReference type="ComplexPortal" id="CPX-737">
    <property type="entry name" value="Box H/ACA ribonucleoprotein complex"/>
</dbReference>
<dbReference type="DIP" id="DIP-4484N"/>
<dbReference type="FunCoup" id="P28007">
    <property type="interactions" value="769"/>
</dbReference>
<dbReference type="IntAct" id="P28007">
    <property type="interactions" value="89"/>
</dbReference>
<dbReference type="MINT" id="P28007"/>
<dbReference type="STRING" id="4932.YHR089C"/>
<dbReference type="iPTMnet" id="P28007"/>
<dbReference type="PaxDb" id="4932-YHR089C"/>
<dbReference type="PeptideAtlas" id="P28007"/>
<dbReference type="EnsemblFungi" id="YHR089C_mRNA">
    <property type="protein sequence ID" value="YHR089C"/>
    <property type="gene ID" value="YHR089C"/>
</dbReference>
<dbReference type="GeneID" id="856489"/>
<dbReference type="KEGG" id="sce:YHR089C"/>
<dbReference type="AGR" id="SGD:S000001131"/>
<dbReference type="SGD" id="S000001131">
    <property type="gene designation" value="GAR1"/>
</dbReference>
<dbReference type="VEuPathDB" id="FungiDB:YHR089C"/>
<dbReference type="eggNOG" id="KOG3262">
    <property type="taxonomic scope" value="Eukaryota"/>
</dbReference>
<dbReference type="GeneTree" id="ENSGT00730000111223"/>
<dbReference type="HOGENOM" id="CLU_080002_1_0_1"/>
<dbReference type="InParanoid" id="P28007"/>
<dbReference type="OMA" id="KPQDGIV"/>
<dbReference type="OrthoDB" id="2187159at2759"/>
<dbReference type="BioCyc" id="MetaCyc:G3O-31136-MONOMER"/>
<dbReference type="BioCyc" id="YEAST:G3O-31136-MONOMER"/>
<dbReference type="BioGRID-ORCS" id="856489">
    <property type="hits" value="8 hits in 10 CRISPR screens"/>
</dbReference>
<dbReference type="CD-CODE" id="BDAE0F88">
    <property type="entry name" value="Nucleolus"/>
</dbReference>
<dbReference type="EvolutionaryTrace" id="P28007"/>
<dbReference type="PRO" id="PR:P28007"/>
<dbReference type="Proteomes" id="UP000002311">
    <property type="component" value="Chromosome VIII"/>
</dbReference>
<dbReference type="RNAct" id="P28007">
    <property type="molecule type" value="protein"/>
</dbReference>
<dbReference type="GO" id="GO:0031429">
    <property type="term" value="C:box H/ACA snoRNP complex"/>
    <property type="evidence" value="ECO:0000314"/>
    <property type="project" value="UniProtKB"/>
</dbReference>
<dbReference type="GO" id="GO:0005730">
    <property type="term" value="C:nucleolus"/>
    <property type="evidence" value="ECO:0000314"/>
    <property type="project" value="GO_Central"/>
</dbReference>
<dbReference type="GO" id="GO:0034513">
    <property type="term" value="F:box H/ACA snoRNA binding"/>
    <property type="evidence" value="ECO:0000353"/>
    <property type="project" value="SGD"/>
</dbReference>
<dbReference type="GO" id="GO:0000454">
    <property type="term" value="P:snoRNA guided rRNA pseudouridine synthesis"/>
    <property type="evidence" value="ECO:0000314"/>
    <property type="project" value="ComplexPortal"/>
</dbReference>
<dbReference type="GO" id="GO:0031120">
    <property type="term" value="P:snRNA pseudouridine synthesis"/>
    <property type="evidence" value="ECO:0000314"/>
    <property type="project" value="UniProtKB"/>
</dbReference>
<dbReference type="FunFam" id="2.40.10.230:FF:000001">
    <property type="entry name" value="H/ACA ribonucleoprotein complex subunit"/>
    <property type="match status" value="1"/>
</dbReference>
<dbReference type="Gene3D" id="2.40.10.230">
    <property type="entry name" value="Probable tRNA pseudouridine synthase domain"/>
    <property type="match status" value="1"/>
</dbReference>
<dbReference type="InterPro" id="IPR038664">
    <property type="entry name" value="Gar1/Naf1_Cbf5-bd_sf"/>
</dbReference>
<dbReference type="InterPro" id="IPR007504">
    <property type="entry name" value="H/ACA_rnp_Gar1/Naf1"/>
</dbReference>
<dbReference type="InterPro" id="IPR009000">
    <property type="entry name" value="Transl_B-barrel_sf"/>
</dbReference>
<dbReference type="PANTHER" id="PTHR23237:SF6">
    <property type="entry name" value="H_ACA RIBONUCLEOPROTEIN COMPLEX SUBUNIT 1"/>
    <property type="match status" value="1"/>
</dbReference>
<dbReference type="PANTHER" id="PTHR23237">
    <property type="entry name" value="NUCLEOLAR PROTEIN FAMILY A MEMBER 1 SNORNP PROTEIN GAR1"/>
    <property type="match status" value="1"/>
</dbReference>
<dbReference type="Pfam" id="PF04410">
    <property type="entry name" value="Gar1"/>
    <property type="match status" value="1"/>
</dbReference>
<dbReference type="SUPFAM" id="SSF50447">
    <property type="entry name" value="Translation proteins"/>
    <property type="match status" value="1"/>
</dbReference>
<name>GAR1_YEAST</name>
<gene>
    <name evidence="11" type="primary">GAR1</name>
    <name type="ordered locus">YHR089C</name>
</gene>
<proteinExistence type="evidence at protein level"/>
<accession>P28007</accession>
<accession>D3DL41</accession>